<keyword id="KW-0489">Methyltransferase</keyword>
<keyword id="KW-1185">Reference proteome</keyword>
<keyword id="KW-0949">S-adenosyl-L-methionine</keyword>
<keyword id="KW-0808">Transferase</keyword>
<keyword id="KW-0819">tRNA processing</keyword>
<name>TRMB_NITMU</name>
<protein>
    <recommendedName>
        <fullName evidence="2">tRNA (guanine-N(7)-)-methyltransferase</fullName>
        <ecNumber evidence="2">2.1.1.33</ecNumber>
    </recommendedName>
    <alternativeName>
        <fullName evidence="2">tRNA (guanine(46)-N(7))-methyltransferase</fullName>
    </alternativeName>
    <alternativeName>
        <fullName evidence="2">tRNA(m7G46)-methyltransferase</fullName>
    </alternativeName>
</protein>
<dbReference type="EC" id="2.1.1.33" evidence="2"/>
<dbReference type="EMBL" id="CP000103">
    <property type="protein sequence ID" value="ABB73378.1"/>
    <property type="molecule type" value="Genomic_DNA"/>
</dbReference>
<dbReference type="RefSeq" id="WP_011379433.1">
    <property type="nucleotide sequence ID" value="NC_007614.1"/>
</dbReference>
<dbReference type="SMR" id="Q2YCZ3"/>
<dbReference type="STRING" id="323848.Nmul_A0069"/>
<dbReference type="KEGG" id="nmu:Nmul_A0069"/>
<dbReference type="eggNOG" id="COG0220">
    <property type="taxonomic scope" value="Bacteria"/>
</dbReference>
<dbReference type="HOGENOM" id="CLU_050910_0_1_4"/>
<dbReference type="OrthoDB" id="9802090at2"/>
<dbReference type="UniPathway" id="UPA00989"/>
<dbReference type="Proteomes" id="UP000002718">
    <property type="component" value="Chromosome"/>
</dbReference>
<dbReference type="GO" id="GO:0043527">
    <property type="term" value="C:tRNA methyltransferase complex"/>
    <property type="evidence" value="ECO:0007669"/>
    <property type="project" value="TreeGrafter"/>
</dbReference>
<dbReference type="GO" id="GO:0008176">
    <property type="term" value="F:tRNA (guanine(46)-N7)-methyltransferase activity"/>
    <property type="evidence" value="ECO:0007669"/>
    <property type="project" value="UniProtKB-UniRule"/>
</dbReference>
<dbReference type="CDD" id="cd02440">
    <property type="entry name" value="AdoMet_MTases"/>
    <property type="match status" value="1"/>
</dbReference>
<dbReference type="FunFam" id="3.40.50.150:FF:000035">
    <property type="entry name" value="tRNA (guanine-N(7)-)-methyltransferase"/>
    <property type="match status" value="1"/>
</dbReference>
<dbReference type="Gene3D" id="3.40.50.150">
    <property type="entry name" value="Vaccinia Virus protein VP39"/>
    <property type="match status" value="1"/>
</dbReference>
<dbReference type="HAMAP" id="MF_01057">
    <property type="entry name" value="tRNA_methyltr_TrmB"/>
    <property type="match status" value="1"/>
</dbReference>
<dbReference type="InterPro" id="IPR029063">
    <property type="entry name" value="SAM-dependent_MTases_sf"/>
</dbReference>
<dbReference type="InterPro" id="IPR003358">
    <property type="entry name" value="tRNA_(Gua-N-7)_MeTrfase_Trmb"/>
</dbReference>
<dbReference type="InterPro" id="IPR055361">
    <property type="entry name" value="tRNA_methyltr_TrmB_bact"/>
</dbReference>
<dbReference type="NCBIfam" id="TIGR00091">
    <property type="entry name" value="tRNA (guanosine(46)-N7)-methyltransferase TrmB"/>
    <property type="match status" value="1"/>
</dbReference>
<dbReference type="PANTHER" id="PTHR23417">
    <property type="entry name" value="3-DEOXY-D-MANNO-OCTULOSONIC-ACID TRANSFERASE/TRNA GUANINE-N 7 - -METHYLTRANSFERASE"/>
    <property type="match status" value="1"/>
</dbReference>
<dbReference type="PANTHER" id="PTHR23417:SF14">
    <property type="entry name" value="PENTACOTRIPEPTIDE-REPEAT REGION OF PRORP DOMAIN-CONTAINING PROTEIN"/>
    <property type="match status" value="1"/>
</dbReference>
<dbReference type="Pfam" id="PF02390">
    <property type="entry name" value="Methyltransf_4"/>
    <property type="match status" value="1"/>
</dbReference>
<dbReference type="SUPFAM" id="SSF53335">
    <property type="entry name" value="S-adenosyl-L-methionine-dependent methyltransferases"/>
    <property type="match status" value="1"/>
</dbReference>
<dbReference type="PROSITE" id="PS51625">
    <property type="entry name" value="SAM_MT_TRMB"/>
    <property type="match status" value="1"/>
</dbReference>
<evidence type="ECO:0000250" key="1"/>
<evidence type="ECO:0000255" key="2">
    <source>
        <dbReference type="HAMAP-Rule" id="MF_01057"/>
    </source>
</evidence>
<proteinExistence type="inferred from homology"/>
<feature type="chain" id="PRO_0000229180" description="tRNA (guanine-N(7)-)-methyltransferase">
    <location>
        <begin position="1"/>
        <end position="229"/>
    </location>
</feature>
<feature type="active site" evidence="1">
    <location>
        <position position="134"/>
    </location>
</feature>
<feature type="binding site" evidence="2">
    <location>
        <position position="59"/>
    </location>
    <ligand>
        <name>S-adenosyl-L-methionine</name>
        <dbReference type="ChEBI" id="CHEBI:59789"/>
    </ligand>
</feature>
<feature type="binding site" evidence="2">
    <location>
        <position position="84"/>
    </location>
    <ligand>
        <name>S-adenosyl-L-methionine</name>
        <dbReference type="ChEBI" id="CHEBI:59789"/>
    </ligand>
</feature>
<feature type="binding site" evidence="2">
    <location>
        <position position="111"/>
    </location>
    <ligand>
        <name>S-adenosyl-L-methionine</name>
        <dbReference type="ChEBI" id="CHEBI:59789"/>
    </ligand>
</feature>
<feature type="binding site" evidence="2">
    <location>
        <position position="134"/>
    </location>
    <ligand>
        <name>S-adenosyl-L-methionine</name>
        <dbReference type="ChEBI" id="CHEBI:59789"/>
    </ligand>
</feature>
<feature type="binding site" evidence="2">
    <location>
        <position position="138"/>
    </location>
    <ligand>
        <name>substrate</name>
    </ligand>
</feature>
<feature type="binding site" evidence="2">
    <location>
        <position position="170"/>
    </location>
    <ligand>
        <name>substrate</name>
    </ligand>
</feature>
<feature type="binding site" evidence="2">
    <location>
        <begin position="205"/>
        <end position="208"/>
    </location>
    <ligand>
        <name>substrate</name>
    </ligand>
</feature>
<organism>
    <name type="scientific">Nitrosospira multiformis (strain ATCC 25196 / NCIMB 11849 / C 71)</name>
    <dbReference type="NCBI Taxonomy" id="323848"/>
    <lineage>
        <taxon>Bacteria</taxon>
        <taxon>Pseudomonadati</taxon>
        <taxon>Pseudomonadota</taxon>
        <taxon>Betaproteobacteria</taxon>
        <taxon>Nitrosomonadales</taxon>
        <taxon>Nitrosomonadaceae</taxon>
        <taxon>Nitrosospira</taxon>
    </lineage>
</organism>
<comment type="function">
    <text evidence="2">Catalyzes the formation of N(7)-methylguanine at position 46 (m7G46) in tRNA.</text>
</comment>
<comment type="catalytic activity">
    <reaction evidence="2">
        <text>guanosine(46) in tRNA + S-adenosyl-L-methionine = N(7)-methylguanosine(46) in tRNA + S-adenosyl-L-homocysteine</text>
        <dbReference type="Rhea" id="RHEA:42708"/>
        <dbReference type="Rhea" id="RHEA-COMP:10188"/>
        <dbReference type="Rhea" id="RHEA-COMP:10189"/>
        <dbReference type="ChEBI" id="CHEBI:57856"/>
        <dbReference type="ChEBI" id="CHEBI:59789"/>
        <dbReference type="ChEBI" id="CHEBI:74269"/>
        <dbReference type="ChEBI" id="CHEBI:74480"/>
        <dbReference type="EC" id="2.1.1.33"/>
    </reaction>
</comment>
<comment type="pathway">
    <text evidence="2">tRNA modification; N(7)-methylguanine-tRNA biosynthesis.</text>
</comment>
<comment type="similarity">
    <text evidence="2">Belongs to the class I-like SAM-binding methyltransferase superfamily. TrmB family.</text>
</comment>
<reference key="1">
    <citation type="submission" date="2005-08" db="EMBL/GenBank/DDBJ databases">
        <title>Complete sequence of chromosome 1 of Nitrosospira multiformis ATCC 25196.</title>
        <authorList>
            <person name="Copeland A."/>
            <person name="Lucas S."/>
            <person name="Lapidus A."/>
            <person name="Barry K."/>
            <person name="Detter J.C."/>
            <person name="Glavina T."/>
            <person name="Hammon N."/>
            <person name="Israni S."/>
            <person name="Pitluck S."/>
            <person name="Chain P."/>
            <person name="Malfatti S."/>
            <person name="Shin M."/>
            <person name="Vergez L."/>
            <person name="Schmutz J."/>
            <person name="Larimer F."/>
            <person name="Land M."/>
            <person name="Hauser L."/>
            <person name="Kyrpides N."/>
            <person name="Lykidis A."/>
            <person name="Richardson P."/>
        </authorList>
    </citation>
    <scope>NUCLEOTIDE SEQUENCE [LARGE SCALE GENOMIC DNA]</scope>
    <source>
        <strain>ATCC 25196 / NCIMB 11849 / C 71</strain>
    </source>
</reference>
<sequence length="229" mass="26016">MVEHSPHRPIRSFVLRQGRLSNAQRRAHETLMPKYGIPYSGKLLDLAIIFSRSAPKFLEIGFGMGETTALIAQAHPQNDYLAAEVHTPGMGSLLKQVEELELTNIRVIQHDAVDVLQHALPPECLDGVHVFFPDPWPKARHHKRRLIQAEFVDLLCSRLKPGGYIHVATDWEDYAEQILEVLSGEPHLSNTAVGYAPRPEYRPLTKFEQRGLRLGHEVWDVIFRKKQGA</sequence>
<gene>
    <name evidence="2" type="primary">trmB</name>
    <name type="ordered locus">Nmul_A0069</name>
</gene>
<accession>Q2YCZ3</accession>